<protein>
    <recommendedName>
        <fullName evidence="1">5'-methylthioadenosine/S-adenosylhomocysteine nucleosidase</fullName>
        <shortName evidence="1">MTA/SAH nucleosidase</shortName>
        <shortName evidence="1">MTAN</shortName>
        <ecNumber evidence="1">3.2.2.9</ecNumber>
    </recommendedName>
    <alternativeName>
        <fullName evidence="1">5'-deoxyadenosine nucleosidase</fullName>
        <shortName evidence="1">DOA nucleosidase</shortName>
        <shortName evidence="1">dAdo nucleosidase</shortName>
    </alternativeName>
    <alternativeName>
        <fullName evidence="1">5'-methylthioadenosine nucleosidase</fullName>
        <shortName evidence="1">MTA nucleosidase</shortName>
    </alternativeName>
    <alternativeName>
        <fullName evidence="1">S-adenosylhomocysteine nucleosidase</fullName>
        <shortName evidence="1">AdoHcy nucleosidase</shortName>
        <shortName evidence="1">SAH nucleosidase</shortName>
        <shortName evidence="1">SRH nucleosidase</shortName>
    </alternativeName>
</protein>
<keyword id="KW-0028">Amino-acid biosynthesis</keyword>
<keyword id="KW-0378">Hydrolase</keyword>
<keyword id="KW-0486">Methionine biosynthesis</keyword>
<keyword id="KW-1185">Reference proteome</keyword>
<name>MTNN_SHEON</name>
<accession>Q8EHA7</accession>
<gene>
    <name evidence="1" type="primary">mtnN</name>
    <name type="ordered locus">SO_1322</name>
</gene>
<comment type="function">
    <text evidence="1">Catalyzes the irreversible cleavage of the glycosidic bond in both 5'-methylthioadenosine (MTA) and S-adenosylhomocysteine (SAH/AdoHcy) to adenine and the corresponding thioribose, 5'-methylthioribose and S-ribosylhomocysteine, respectively. Also cleaves 5'-deoxyadenosine, a toxic by-product of radical S-adenosylmethionine (SAM) enzymes, into 5-deoxyribose and adenine.</text>
</comment>
<comment type="catalytic activity">
    <reaction evidence="1">
        <text>S-adenosyl-L-homocysteine + H2O = S-(5-deoxy-D-ribos-5-yl)-L-homocysteine + adenine</text>
        <dbReference type="Rhea" id="RHEA:17805"/>
        <dbReference type="ChEBI" id="CHEBI:15377"/>
        <dbReference type="ChEBI" id="CHEBI:16708"/>
        <dbReference type="ChEBI" id="CHEBI:57856"/>
        <dbReference type="ChEBI" id="CHEBI:58195"/>
        <dbReference type="EC" id="3.2.2.9"/>
    </reaction>
</comment>
<comment type="catalytic activity">
    <reaction evidence="1">
        <text>S-methyl-5'-thioadenosine + H2O = 5-(methylsulfanyl)-D-ribose + adenine</text>
        <dbReference type="Rhea" id="RHEA:13617"/>
        <dbReference type="ChEBI" id="CHEBI:15377"/>
        <dbReference type="ChEBI" id="CHEBI:16708"/>
        <dbReference type="ChEBI" id="CHEBI:17509"/>
        <dbReference type="ChEBI" id="CHEBI:78440"/>
        <dbReference type="EC" id="3.2.2.9"/>
    </reaction>
</comment>
<comment type="catalytic activity">
    <reaction evidence="1">
        <text>5'-deoxyadenosine + H2O = 5-deoxy-D-ribose + adenine</text>
        <dbReference type="Rhea" id="RHEA:29859"/>
        <dbReference type="ChEBI" id="CHEBI:15377"/>
        <dbReference type="ChEBI" id="CHEBI:16708"/>
        <dbReference type="ChEBI" id="CHEBI:17319"/>
        <dbReference type="ChEBI" id="CHEBI:149540"/>
        <dbReference type="EC" id="3.2.2.9"/>
    </reaction>
    <physiologicalReaction direction="left-to-right" evidence="1">
        <dbReference type="Rhea" id="RHEA:29860"/>
    </physiologicalReaction>
</comment>
<comment type="pathway">
    <text evidence="1">Amino-acid biosynthesis; L-methionine biosynthesis via salvage pathway; S-methyl-5-thio-alpha-D-ribose 1-phosphate from S-methyl-5'-thioadenosine (hydrolase route): step 1/2.</text>
</comment>
<comment type="similarity">
    <text evidence="1">Belongs to the PNP/UDP phosphorylase family. MtnN subfamily.</text>
</comment>
<feature type="chain" id="PRO_0000359347" description="5'-methylthioadenosine/S-adenosylhomocysteine nucleosidase">
    <location>
        <begin position="1"/>
        <end position="236"/>
    </location>
</feature>
<feature type="active site" description="Proton acceptor" evidence="1">
    <location>
        <position position="12"/>
    </location>
</feature>
<feature type="active site" description="Proton donor" evidence="1">
    <location>
        <position position="198"/>
    </location>
</feature>
<feature type="binding site" evidence="1">
    <location>
        <position position="78"/>
    </location>
    <ligand>
        <name>substrate</name>
    </ligand>
</feature>
<feature type="binding site" evidence="1">
    <location>
        <position position="153"/>
    </location>
    <ligand>
        <name>substrate</name>
    </ligand>
</feature>
<feature type="binding site" evidence="1">
    <location>
        <begin position="174"/>
        <end position="175"/>
    </location>
    <ligand>
        <name>substrate</name>
    </ligand>
</feature>
<sequence>MKIGIIGAMEPEVAHLIAAMTNTSSQTIADIEFIAGTLAGKDVVVTRSGIGKVAASIATTLLIEKYAPDAVINTGSAGGFVDSLSIGDIVISSEVRHHDVDVTAFGYEIGQMAQQPAAFIPAPYLVEAANKAIAQLGEVRAIEGLICTGDSFICDPVRTKTMLEHFPTMAACEMEGAAIAQVCHQFGVPFVVIRSLSDNANNDSPVDFDAYIVKAGYHSALMVMLLLEQLEPNSVK</sequence>
<reference key="1">
    <citation type="journal article" date="2002" name="Nat. Biotechnol.">
        <title>Genome sequence of the dissimilatory metal ion-reducing bacterium Shewanella oneidensis.</title>
        <authorList>
            <person name="Heidelberg J.F."/>
            <person name="Paulsen I.T."/>
            <person name="Nelson K.E."/>
            <person name="Gaidos E.J."/>
            <person name="Nelson W.C."/>
            <person name="Read T.D."/>
            <person name="Eisen J.A."/>
            <person name="Seshadri R."/>
            <person name="Ward N.L."/>
            <person name="Methe B.A."/>
            <person name="Clayton R.A."/>
            <person name="Meyer T."/>
            <person name="Tsapin A."/>
            <person name="Scott J."/>
            <person name="Beanan M.J."/>
            <person name="Brinkac L.M."/>
            <person name="Daugherty S.C."/>
            <person name="DeBoy R.T."/>
            <person name="Dodson R.J."/>
            <person name="Durkin A.S."/>
            <person name="Haft D.H."/>
            <person name="Kolonay J.F."/>
            <person name="Madupu R."/>
            <person name="Peterson J.D."/>
            <person name="Umayam L.A."/>
            <person name="White O."/>
            <person name="Wolf A.M."/>
            <person name="Vamathevan J.J."/>
            <person name="Weidman J.F."/>
            <person name="Impraim M."/>
            <person name="Lee K."/>
            <person name="Berry K.J."/>
            <person name="Lee C."/>
            <person name="Mueller J."/>
            <person name="Khouri H.M."/>
            <person name="Gill J."/>
            <person name="Utterback T.R."/>
            <person name="McDonald L.A."/>
            <person name="Feldblyum T.V."/>
            <person name="Smith H.O."/>
            <person name="Venter J.C."/>
            <person name="Nealson K.H."/>
            <person name="Fraser C.M."/>
        </authorList>
    </citation>
    <scope>NUCLEOTIDE SEQUENCE [LARGE SCALE GENOMIC DNA]</scope>
    <source>
        <strain>ATCC 700550 / JCM 31522 / CIP 106686 / LMG 19005 / NCIMB 14063 / MR-1</strain>
    </source>
</reference>
<organism>
    <name type="scientific">Shewanella oneidensis (strain ATCC 700550 / JCM 31522 / CIP 106686 / LMG 19005 / NCIMB 14063 / MR-1)</name>
    <dbReference type="NCBI Taxonomy" id="211586"/>
    <lineage>
        <taxon>Bacteria</taxon>
        <taxon>Pseudomonadati</taxon>
        <taxon>Pseudomonadota</taxon>
        <taxon>Gammaproteobacteria</taxon>
        <taxon>Alteromonadales</taxon>
        <taxon>Shewanellaceae</taxon>
        <taxon>Shewanella</taxon>
    </lineage>
</organism>
<dbReference type="EC" id="3.2.2.9" evidence="1"/>
<dbReference type="EMBL" id="AE014299">
    <property type="protein sequence ID" value="AAN54387.1"/>
    <property type="molecule type" value="Genomic_DNA"/>
</dbReference>
<dbReference type="RefSeq" id="NP_716942.1">
    <property type="nucleotide sequence ID" value="NC_004347.2"/>
</dbReference>
<dbReference type="RefSeq" id="WP_011071532.1">
    <property type="nucleotide sequence ID" value="NC_004347.2"/>
</dbReference>
<dbReference type="SMR" id="Q8EHA7"/>
<dbReference type="STRING" id="211586.SO_1322"/>
<dbReference type="PaxDb" id="211586-SO_1322"/>
<dbReference type="KEGG" id="son:SO_1322"/>
<dbReference type="PATRIC" id="fig|1028802.3.peg.339"/>
<dbReference type="eggNOG" id="COG0775">
    <property type="taxonomic scope" value="Bacteria"/>
</dbReference>
<dbReference type="HOGENOM" id="CLU_031248_2_2_6"/>
<dbReference type="OrthoDB" id="9792278at2"/>
<dbReference type="PhylomeDB" id="Q8EHA7"/>
<dbReference type="BioCyc" id="SONE211586:G1GMP-1221-MONOMER"/>
<dbReference type="UniPathway" id="UPA00904">
    <property type="reaction ID" value="UER00871"/>
</dbReference>
<dbReference type="Proteomes" id="UP000008186">
    <property type="component" value="Chromosome"/>
</dbReference>
<dbReference type="GO" id="GO:0005829">
    <property type="term" value="C:cytosol"/>
    <property type="evidence" value="ECO:0000318"/>
    <property type="project" value="GO_Central"/>
</dbReference>
<dbReference type="GO" id="GO:0008782">
    <property type="term" value="F:adenosylhomocysteine nucleosidase activity"/>
    <property type="evidence" value="ECO:0000318"/>
    <property type="project" value="GO_Central"/>
</dbReference>
<dbReference type="GO" id="GO:0008930">
    <property type="term" value="F:methylthioadenosine nucleosidase activity"/>
    <property type="evidence" value="ECO:0000318"/>
    <property type="project" value="GO_Central"/>
</dbReference>
<dbReference type="GO" id="GO:0019509">
    <property type="term" value="P:L-methionine salvage from methylthioadenosine"/>
    <property type="evidence" value="ECO:0007669"/>
    <property type="project" value="UniProtKB-UniRule"/>
</dbReference>
<dbReference type="GO" id="GO:0019284">
    <property type="term" value="P:L-methionine salvage from S-adenosylmethionine"/>
    <property type="evidence" value="ECO:0000318"/>
    <property type="project" value="GO_Central"/>
</dbReference>
<dbReference type="GO" id="GO:0009164">
    <property type="term" value="P:nucleoside catabolic process"/>
    <property type="evidence" value="ECO:0007669"/>
    <property type="project" value="InterPro"/>
</dbReference>
<dbReference type="CDD" id="cd09008">
    <property type="entry name" value="MTAN"/>
    <property type="match status" value="1"/>
</dbReference>
<dbReference type="FunFam" id="3.40.50.1580:FF:000001">
    <property type="entry name" value="MTA/SAH nucleosidase family protein"/>
    <property type="match status" value="1"/>
</dbReference>
<dbReference type="Gene3D" id="3.40.50.1580">
    <property type="entry name" value="Nucleoside phosphorylase domain"/>
    <property type="match status" value="1"/>
</dbReference>
<dbReference type="HAMAP" id="MF_01684">
    <property type="entry name" value="Salvage_MtnN"/>
    <property type="match status" value="1"/>
</dbReference>
<dbReference type="InterPro" id="IPR010049">
    <property type="entry name" value="MTA_SAH_Nsdase"/>
</dbReference>
<dbReference type="InterPro" id="IPR000845">
    <property type="entry name" value="Nucleoside_phosphorylase_d"/>
</dbReference>
<dbReference type="InterPro" id="IPR035994">
    <property type="entry name" value="Nucleoside_phosphorylase_sf"/>
</dbReference>
<dbReference type="NCBIfam" id="TIGR01704">
    <property type="entry name" value="MTA_SAH-Nsdase"/>
    <property type="match status" value="1"/>
</dbReference>
<dbReference type="NCBIfam" id="NF004079">
    <property type="entry name" value="PRK05584.1"/>
    <property type="match status" value="1"/>
</dbReference>
<dbReference type="PANTHER" id="PTHR46832">
    <property type="entry name" value="5'-METHYLTHIOADENOSINE/S-ADENOSYLHOMOCYSTEINE NUCLEOSIDASE"/>
    <property type="match status" value="1"/>
</dbReference>
<dbReference type="PANTHER" id="PTHR46832:SF1">
    <property type="entry name" value="5'-METHYLTHIOADENOSINE_S-ADENOSYLHOMOCYSTEINE NUCLEOSIDASE"/>
    <property type="match status" value="1"/>
</dbReference>
<dbReference type="Pfam" id="PF01048">
    <property type="entry name" value="PNP_UDP_1"/>
    <property type="match status" value="1"/>
</dbReference>
<dbReference type="SUPFAM" id="SSF53167">
    <property type="entry name" value="Purine and uridine phosphorylases"/>
    <property type="match status" value="1"/>
</dbReference>
<proteinExistence type="inferred from homology"/>
<evidence type="ECO:0000255" key="1">
    <source>
        <dbReference type="HAMAP-Rule" id="MF_01684"/>
    </source>
</evidence>